<organism>
    <name type="scientific">Schizosaccharomyces pombe (strain 972 / ATCC 24843)</name>
    <name type="common">Fission yeast</name>
    <dbReference type="NCBI Taxonomy" id="284812"/>
    <lineage>
        <taxon>Eukaryota</taxon>
        <taxon>Fungi</taxon>
        <taxon>Dikarya</taxon>
        <taxon>Ascomycota</taxon>
        <taxon>Taphrinomycotina</taxon>
        <taxon>Schizosaccharomycetes</taxon>
        <taxon>Schizosaccharomycetales</taxon>
        <taxon>Schizosaccharomycetaceae</taxon>
        <taxon>Schizosaccharomyces</taxon>
    </lineage>
</organism>
<sequence length="128" mass="14595">MQIFVKTLTGKTITLEVESSDTIDNVKSKIQDKEGIPPDQQRLIFAGKQLEDGRTLSDYNIQKESTLHLVLRLRGGIIEPSLKALASKYNCEKQICRKCYARLPPRATNCRKKKCGHTNQLRPKKKLK</sequence>
<protein>
    <recommendedName>
        <fullName evidence="5">Ubiquitin-ribosomal protein eL40B fusion protein</fullName>
    </recommendedName>
    <component>
        <recommendedName>
            <fullName>Ubiquitin</fullName>
        </recommendedName>
    </component>
    <component>
        <recommendedName>
            <fullName evidence="5">Large ribosomal subunit protein eL40B</fullName>
        </recommendedName>
        <alternativeName>
            <fullName>60S ribosomal protein L40</fullName>
        </alternativeName>
        <alternativeName>
            <fullName>CEP52</fullName>
        </alternativeName>
    </component>
</protein>
<feature type="chain" id="PRO_0000396452" description="Ubiquitin">
    <location>
        <begin position="1"/>
        <end position="76"/>
    </location>
</feature>
<feature type="chain" id="PRO_0000396453" description="Large ribosomal subunit protein eL40B">
    <location>
        <begin position="77"/>
        <end position="128"/>
    </location>
</feature>
<feature type="domain" description="Ubiquitin-like" evidence="3">
    <location>
        <begin position="1"/>
        <end position="76"/>
    </location>
</feature>
<feature type="cross-link" description="Glycyl lysine isopeptide (Lys-Gly) (interchain with G-Cter in ubiquitin)">
    <location>
        <position position="6"/>
    </location>
</feature>
<feature type="cross-link" description="Glycyl lysine isopeptide (Lys-Gly) (interchain with G-Cter in ubiquitin)">
    <location>
        <position position="11"/>
    </location>
</feature>
<feature type="cross-link" description="Glycyl lysine isopeptide (Lys-Gly) (interchain with G-Cter in ubiquitin)">
    <location>
        <position position="27"/>
    </location>
</feature>
<feature type="cross-link" description="Glycyl lysine isopeptide (Lys-Gly) (interchain with G-Cter in ubiquitin)" evidence="1">
    <location>
        <position position="29"/>
    </location>
</feature>
<feature type="cross-link" description="Glycyl lysine isopeptide (Lys-Gly) (interchain with G-Cter in ubiquitin)">
    <location>
        <position position="33"/>
    </location>
</feature>
<feature type="cross-link" description="Glycyl lysine isopeptide (Lys-Gly) (interchain with G-Cter in ubiquitin)" evidence="1">
    <location>
        <position position="48"/>
    </location>
</feature>
<feature type="cross-link" description="Glycyl lysine isopeptide (Lys-Gly) (interchain with G-Cter in ubiquitin)" evidence="1">
    <location>
        <position position="63"/>
    </location>
</feature>
<feature type="cross-link" description="Glycyl lysine isopeptide (Gly-Lys) (interchain with K-? in acceptor proteins)" evidence="3">
    <location>
        <position position="76"/>
    </location>
</feature>
<feature type="strand" evidence="6">
    <location>
        <begin position="1"/>
        <end position="7"/>
    </location>
</feature>
<feature type="strand" evidence="6">
    <location>
        <begin position="12"/>
        <end position="18"/>
    </location>
</feature>
<feature type="helix" evidence="6">
    <location>
        <begin position="23"/>
        <end position="34"/>
    </location>
</feature>
<feature type="helix" evidence="6">
    <location>
        <begin position="38"/>
        <end position="40"/>
    </location>
</feature>
<feature type="strand" evidence="6">
    <location>
        <begin position="42"/>
        <end position="45"/>
    </location>
</feature>
<feature type="helix" evidence="6">
    <location>
        <begin position="56"/>
        <end position="59"/>
    </location>
</feature>
<feature type="strand" evidence="6">
    <location>
        <begin position="66"/>
        <end position="70"/>
    </location>
</feature>
<gene>
    <name type="primary">uep1</name>
    <name type="synonym">ubi2</name>
    <name type="ORF">SPAC1805.12c</name>
</gene>
<proteinExistence type="evidence at protein level"/>
<reference key="1">
    <citation type="journal article" date="2002" name="Nature">
        <title>The genome sequence of Schizosaccharomyces pombe.</title>
        <authorList>
            <person name="Wood V."/>
            <person name="Gwilliam R."/>
            <person name="Rajandream M.A."/>
            <person name="Lyne M.H."/>
            <person name="Lyne R."/>
            <person name="Stewart A."/>
            <person name="Sgouros J.G."/>
            <person name="Peat N."/>
            <person name="Hayles J."/>
            <person name="Baker S.G."/>
            <person name="Basham D."/>
            <person name="Bowman S."/>
            <person name="Brooks K."/>
            <person name="Brown D."/>
            <person name="Brown S."/>
            <person name="Chillingworth T."/>
            <person name="Churcher C.M."/>
            <person name="Collins M."/>
            <person name="Connor R."/>
            <person name="Cronin A."/>
            <person name="Davis P."/>
            <person name="Feltwell T."/>
            <person name="Fraser A."/>
            <person name="Gentles S."/>
            <person name="Goble A."/>
            <person name="Hamlin N."/>
            <person name="Harris D.E."/>
            <person name="Hidalgo J."/>
            <person name="Hodgson G."/>
            <person name="Holroyd S."/>
            <person name="Hornsby T."/>
            <person name="Howarth S."/>
            <person name="Huckle E.J."/>
            <person name="Hunt S."/>
            <person name="Jagels K."/>
            <person name="James K.D."/>
            <person name="Jones L."/>
            <person name="Jones M."/>
            <person name="Leather S."/>
            <person name="McDonald S."/>
            <person name="McLean J."/>
            <person name="Mooney P."/>
            <person name="Moule S."/>
            <person name="Mungall K.L."/>
            <person name="Murphy L.D."/>
            <person name="Niblett D."/>
            <person name="Odell C."/>
            <person name="Oliver K."/>
            <person name="O'Neil S."/>
            <person name="Pearson D."/>
            <person name="Quail M.A."/>
            <person name="Rabbinowitsch E."/>
            <person name="Rutherford K.M."/>
            <person name="Rutter S."/>
            <person name="Saunders D."/>
            <person name="Seeger K."/>
            <person name="Sharp S."/>
            <person name="Skelton J."/>
            <person name="Simmonds M.N."/>
            <person name="Squares R."/>
            <person name="Squares S."/>
            <person name="Stevens K."/>
            <person name="Taylor K."/>
            <person name="Taylor R.G."/>
            <person name="Tivey A."/>
            <person name="Walsh S.V."/>
            <person name="Warren T."/>
            <person name="Whitehead S."/>
            <person name="Woodward J.R."/>
            <person name="Volckaert G."/>
            <person name="Aert R."/>
            <person name="Robben J."/>
            <person name="Grymonprez B."/>
            <person name="Weltjens I."/>
            <person name="Vanstreels E."/>
            <person name="Rieger M."/>
            <person name="Schaefer M."/>
            <person name="Mueller-Auer S."/>
            <person name="Gabel C."/>
            <person name="Fuchs M."/>
            <person name="Duesterhoeft A."/>
            <person name="Fritzc C."/>
            <person name="Holzer E."/>
            <person name="Moestl D."/>
            <person name="Hilbert H."/>
            <person name="Borzym K."/>
            <person name="Langer I."/>
            <person name="Beck A."/>
            <person name="Lehrach H."/>
            <person name="Reinhardt R."/>
            <person name="Pohl T.M."/>
            <person name="Eger P."/>
            <person name="Zimmermann W."/>
            <person name="Wedler H."/>
            <person name="Wambutt R."/>
            <person name="Purnelle B."/>
            <person name="Goffeau A."/>
            <person name="Cadieu E."/>
            <person name="Dreano S."/>
            <person name="Gloux S."/>
            <person name="Lelaure V."/>
            <person name="Mottier S."/>
            <person name="Galibert F."/>
            <person name="Aves S.J."/>
            <person name="Xiang Z."/>
            <person name="Hunt C."/>
            <person name="Moore K."/>
            <person name="Hurst S.M."/>
            <person name="Lucas M."/>
            <person name="Rochet M."/>
            <person name="Gaillardin C."/>
            <person name="Tallada V.A."/>
            <person name="Garzon A."/>
            <person name="Thode G."/>
            <person name="Daga R.R."/>
            <person name="Cruzado L."/>
            <person name="Jimenez J."/>
            <person name="Sanchez M."/>
            <person name="del Rey F."/>
            <person name="Benito J."/>
            <person name="Dominguez A."/>
            <person name="Revuelta J.L."/>
            <person name="Moreno S."/>
            <person name="Armstrong J."/>
            <person name="Forsburg S.L."/>
            <person name="Cerutti L."/>
            <person name="Lowe T."/>
            <person name="McCombie W.R."/>
            <person name="Paulsen I."/>
            <person name="Potashkin J."/>
            <person name="Shpakovski G.V."/>
            <person name="Ussery D."/>
            <person name="Barrell B.G."/>
            <person name="Nurse P."/>
        </authorList>
    </citation>
    <scope>NUCLEOTIDE SEQUENCE [LARGE SCALE GENOMIC DNA]</scope>
    <source>
        <strain>972 / ATCC 24843</strain>
    </source>
</reference>
<reference key="2">
    <citation type="journal article" date="2006" name="Nat. Biotechnol.">
        <title>ORFeome cloning and global analysis of protein localization in the fission yeast Schizosaccharomyces pombe.</title>
        <authorList>
            <person name="Matsuyama A."/>
            <person name="Arai R."/>
            <person name="Yashiroda Y."/>
            <person name="Shirai A."/>
            <person name="Kamata A."/>
            <person name="Sekido S."/>
            <person name="Kobayashi Y."/>
            <person name="Hashimoto A."/>
            <person name="Hamamoto M."/>
            <person name="Hiraoka Y."/>
            <person name="Horinouchi S."/>
            <person name="Yoshida M."/>
        </authorList>
    </citation>
    <scope>SUBCELLULAR LOCATION [LARGE SCALE ANALYSIS]</scope>
</reference>
<comment type="function">
    <molecule>Ubiquitin</molecule>
    <text evidence="1">Exists either covalently attached to another protein, or free (unanchored). When covalently bound, it is conjugated to target proteins via an isopeptide bond either as a monomer (monoubiquitin), a polymer linked via different Lys residues of the ubiquitin (polyubiquitin chains) or a linear polymer linked via the initiator Met of the ubiquitin (linear polyubiquitin chains). Polyubiquitin chains, when attached to a target protein, have different functions depending on the Lys residue of the ubiquitin that is linked: Lys-6-linked may be involved in DNA repair; Lys-11-linked is involved in ERAD (endoplasmic reticulum-associated degradation) and in cell-cycle regulation; Lys-29-linked is involved in lysosomal degradation; Lys-33-linked is involved in kinase modification; Lys-48-linked is involved in protein degradation via the proteasome; Lys-63-linked is involved in endocytosis, and DNA-damage responses. Linear polymer chains formed via attachment by the initiator Met lead to cell signaling. Ubiquitin is usually conjugated to Lys residues of target proteins, however, in rare cases, conjugation to Cys or Ser residues has been observed. When polyubiquitin is free (unanchored-polyubiquitin), it also has distinct roles, such as in activation of protein kinases, and in signaling (By similarity).</text>
</comment>
<comment type="function">
    <molecule>Large ribosomal subunit protein eL40B</molecule>
    <text evidence="2">Component of the ribosome, a large ribonucleoprotein complex responsible for the synthesis of proteins in the cell. The small ribosomal subunit (SSU) binds messenger RNAs (mRNAs) and translates the encoded message by selecting cognate aminoacyl-transfer RNA (tRNA) molecules. The large subunit (LSU) contains the ribosomal catalytic site termed the peptidyl transferase center (PTC), which catalyzes the formation of peptide bonds, thereby polymerizing the amino acids delivered by tRNAs into a polypeptide chain. The nascent polypeptides leave the ribosome through a tunnel in the LSU and interact with protein factors that function in enzymatic processing, targeting, and the membrane insertion of nascent chains at the exit of the ribosomal tunnel. eL40 is essential for translation of a subset of cellular transcripts, including stress response transcripts, such as DDR2.</text>
</comment>
<comment type="subunit">
    <molecule>Large ribosomal subunit protein eL40B</molecule>
    <text evidence="2">Component of the large ribosomal subunit (LSU). Mature yeast ribosomes consist of a small (40S) and a large (60S) subunit. The 40S small subunit contains 1 molecule of ribosomal RNA (18S rRNA) and at least 33 different proteins. The large 60S subunit contains 3 rRNA molecules (25S, 5.8S and 5S rRNA) and at least 46 different proteins.</text>
</comment>
<comment type="subcellular location">
    <molecule>Ubiquitin</molecule>
    <subcellularLocation>
        <location evidence="1">Cytoplasm</location>
    </subcellularLocation>
    <subcellularLocation>
        <location evidence="1">Nucleus</location>
    </subcellularLocation>
</comment>
<comment type="subcellular location">
    <molecule>Large ribosomal subunit protein eL40B</molecule>
    <subcellularLocation>
        <location evidence="4">Cytoplasm</location>
    </subcellularLocation>
    <subcellularLocation>
        <location evidence="4">Nucleus</location>
    </subcellularLocation>
    <subcellularLocation>
        <location evidence="4">Nucleus</location>
        <location evidence="4">Nucleolus</location>
    </subcellularLocation>
</comment>
<comment type="miscellaneous">
    <text>Ubiquitin is encoded by 5 different genes. Ubi1 and ubi2 are synthesized as a polyprotein with one copy of ubiquitin fused to ribosomal proteins eL40A and eL40B, respectively. Ubi3 and ubi5 are polyproteins with one copy of ubiquitin fused to ribosomal proteins eS31A and eS31B, respectively. Ubi4 is a polyprotein containing 5 exact head to tail repeats of ubiquitin.</text>
</comment>
<comment type="miscellaneous">
    <text>There are 2 genes for eL40 in S.pombe.</text>
</comment>
<comment type="similarity">
    <text evidence="5">In the N-terminal section; belongs to the ubiquitin family.</text>
</comment>
<comment type="similarity">
    <text evidence="5">In the C-terminal section; belongs to the eukaryotic ribosomal protein eL40 family.</text>
</comment>
<dbReference type="EMBL" id="CU329670">
    <property type="protein sequence ID" value="CAB55853.1"/>
    <property type="molecule type" value="Genomic_DNA"/>
</dbReference>
<dbReference type="PIR" id="T37547">
    <property type="entry name" value="T37547"/>
</dbReference>
<dbReference type="RefSeq" id="NP_593923.1">
    <property type="nucleotide sequence ID" value="NM_001019352.2"/>
</dbReference>
<dbReference type="PDB" id="4II2">
    <property type="method" value="X-ray"/>
    <property type="resolution" value="2.20 A"/>
    <property type="chains" value="B=1-76"/>
</dbReference>
<dbReference type="PDB" id="4II3">
    <property type="method" value="X-ray"/>
    <property type="resolution" value="2.90 A"/>
    <property type="chains" value="B/D=1-76"/>
</dbReference>
<dbReference type="PDB" id="6O82">
    <property type="method" value="X-ray"/>
    <property type="resolution" value="2.60 A"/>
    <property type="chains" value="B/D=1-76"/>
</dbReference>
<dbReference type="PDB" id="6O83">
    <property type="method" value="X-ray"/>
    <property type="resolution" value="3.15 A"/>
    <property type="chains" value="B/D=1-75"/>
</dbReference>
<dbReference type="PDB" id="9B55">
    <property type="method" value="EM"/>
    <property type="resolution" value="3.23 A"/>
    <property type="chains" value="B=1-75"/>
</dbReference>
<dbReference type="PDB" id="9B56">
    <property type="method" value="EM"/>
    <property type="resolution" value="3.35 A"/>
    <property type="chains" value="B=1-75"/>
</dbReference>
<dbReference type="PDB" id="9B57">
    <property type="method" value="EM"/>
    <property type="resolution" value="3.37 A"/>
    <property type="chains" value="B=1-75"/>
</dbReference>
<dbReference type="PDB" id="9B58">
    <property type="method" value="EM"/>
    <property type="resolution" value="3.39 A"/>
    <property type="chains" value="B=1-75"/>
</dbReference>
<dbReference type="PDB" id="9B59">
    <property type="method" value="EM"/>
    <property type="resolution" value="3.49 A"/>
    <property type="chains" value="B=1-75"/>
</dbReference>
<dbReference type="PDB" id="9B5A">
    <property type="method" value="EM"/>
    <property type="resolution" value="3.65 A"/>
    <property type="chains" value="B=1-75"/>
</dbReference>
<dbReference type="PDB" id="9B5B">
    <property type="method" value="EM"/>
    <property type="resolution" value="3.31 A"/>
    <property type="chains" value="B=1-75"/>
</dbReference>
<dbReference type="PDB" id="9B5C">
    <property type="method" value="EM"/>
    <property type="resolution" value="2.50 A"/>
    <property type="chains" value="B=1-76, D=1-75"/>
</dbReference>
<dbReference type="PDB" id="9B5D">
    <property type="method" value="EM"/>
    <property type="resolution" value="2.80 A"/>
    <property type="chains" value="B=1-76, D=1-75"/>
</dbReference>
<dbReference type="PDB" id="9B5E">
    <property type="method" value="EM"/>
    <property type="resolution" value="2.81 A"/>
    <property type="chains" value="B=1-76, D=1-75"/>
</dbReference>
<dbReference type="PDB" id="9B5F">
    <property type="method" value="EM"/>
    <property type="resolution" value="2.78 A"/>
    <property type="chains" value="D=1-75"/>
</dbReference>
<dbReference type="PDB" id="9B5G">
    <property type="method" value="EM"/>
    <property type="resolution" value="2.67 A"/>
    <property type="chains" value="B=1-76, D=1-75"/>
</dbReference>
<dbReference type="PDB" id="9B5H">
    <property type="method" value="EM"/>
    <property type="resolution" value="2.69 A"/>
    <property type="chains" value="B=1-76, D=1-75"/>
</dbReference>
<dbReference type="PDB" id="9B5I">
    <property type="method" value="EM"/>
    <property type="resolution" value="2.70 A"/>
    <property type="chains" value="D=1-75"/>
</dbReference>
<dbReference type="PDB" id="9B5J">
    <property type="method" value="EM"/>
    <property type="resolution" value="2.86 A"/>
    <property type="chains" value="B=1-76, D=1-75"/>
</dbReference>
<dbReference type="PDB" id="9B5K">
    <property type="method" value="EM"/>
    <property type="resolution" value="3.16 A"/>
    <property type="chains" value="B=1-76, D=1-75"/>
</dbReference>
<dbReference type="PDB" id="9B5L">
    <property type="method" value="EM"/>
    <property type="resolution" value="3.30 A"/>
    <property type="chains" value="D=1-75"/>
</dbReference>
<dbReference type="PDB" id="9B5M">
    <property type="method" value="EM"/>
    <property type="resolution" value="2.79 A"/>
    <property type="chains" value="D=1-75"/>
</dbReference>
<dbReference type="PDB" id="9B5N">
    <property type="method" value="EM"/>
    <property type="resolution" value="3.12 A"/>
    <property type="chains" value="D=1-75"/>
</dbReference>
<dbReference type="PDB" id="9B5O">
    <property type="method" value="EM"/>
    <property type="resolution" value="3.19 A"/>
    <property type="chains" value="D=1-75"/>
</dbReference>
<dbReference type="PDB" id="9B5P">
    <property type="method" value="EM"/>
    <property type="resolution" value="3.08 A"/>
    <property type="chains" value="D=1-75"/>
</dbReference>
<dbReference type="PDB" id="9B5Q">
    <property type="method" value="EM"/>
    <property type="resolution" value="2.95 A"/>
    <property type="chains" value="D=1-75"/>
</dbReference>
<dbReference type="PDB" id="9B5R">
    <property type="method" value="EM"/>
    <property type="resolution" value="2.95 A"/>
    <property type="chains" value="D=1-75"/>
</dbReference>
<dbReference type="PDB" id="9B5S">
    <property type="method" value="EM"/>
    <property type="resolution" value="2.96 A"/>
    <property type="chains" value="D=1-75"/>
</dbReference>
<dbReference type="PDB" id="9B5T">
    <property type="method" value="EM"/>
    <property type="resolution" value="3.16 A"/>
    <property type="chains" value="D=1-75"/>
</dbReference>
<dbReference type="PDB" id="9B5U">
    <property type="method" value="EM"/>
    <property type="resolution" value="3.67 A"/>
    <property type="chains" value="D=1-75"/>
</dbReference>
<dbReference type="PDB" id="9B5V">
    <property type="method" value="EM"/>
    <property type="resolution" value="3.94 A"/>
    <property type="chains" value="D=1-75"/>
</dbReference>
<dbReference type="PDB" id="9B5W">
    <property type="method" value="EM"/>
    <property type="resolution" value="3.96 A"/>
    <property type="chains" value="D=1-75"/>
</dbReference>
<dbReference type="PDB" id="9B5X">
    <property type="method" value="EM"/>
    <property type="resolution" value="4.16 A"/>
    <property type="chains" value="D=1-75"/>
</dbReference>
<dbReference type="PDBsum" id="4II2"/>
<dbReference type="PDBsum" id="4II3"/>
<dbReference type="PDBsum" id="6O82"/>
<dbReference type="PDBsum" id="6O83"/>
<dbReference type="PDBsum" id="9B55"/>
<dbReference type="PDBsum" id="9B56"/>
<dbReference type="PDBsum" id="9B57"/>
<dbReference type="PDBsum" id="9B58"/>
<dbReference type="PDBsum" id="9B59"/>
<dbReference type="PDBsum" id="9B5A"/>
<dbReference type="PDBsum" id="9B5B"/>
<dbReference type="PDBsum" id="9B5C"/>
<dbReference type="PDBsum" id="9B5D"/>
<dbReference type="PDBsum" id="9B5E"/>
<dbReference type="PDBsum" id="9B5F"/>
<dbReference type="PDBsum" id="9B5G"/>
<dbReference type="PDBsum" id="9B5H"/>
<dbReference type="PDBsum" id="9B5I"/>
<dbReference type="PDBsum" id="9B5J"/>
<dbReference type="PDBsum" id="9B5K"/>
<dbReference type="PDBsum" id="9B5L"/>
<dbReference type="PDBsum" id="9B5M"/>
<dbReference type="PDBsum" id="9B5N"/>
<dbReference type="PDBsum" id="9B5O"/>
<dbReference type="PDBsum" id="9B5P"/>
<dbReference type="PDBsum" id="9B5Q"/>
<dbReference type="PDBsum" id="9B5R"/>
<dbReference type="PDBsum" id="9B5S"/>
<dbReference type="PDBsum" id="9B5T"/>
<dbReference type="PDBsum" id="9B5U"/>
<dbReference type="PDBsum" id="9B5V"/>
<dbReference type="PDBsum" id="9B5W"/>
<dbReference type="PDBsum" id="9B5X"/>
<dbReference type="EMDB" id="EMD-44200"/>
<dbReference type="EMDB" id="EMD-44201"/>
<dbReference type="EMDB" id="EMD-44202"/>
<dbReference type="EMDB" id="EMD-44203"/>
<dbReference type="EMDB" id="EMD-44204"/>
<dbReference type="EMDB" id="EMD-44205"/>
<dbReference type="EMDB" id="EMD-44206"/>
<dbReference type="EMDB" id="EMD-44207"/>
<dbReference type="EMDB" id="EMD-44208"/>
<dbReference type="EMDB" id="EMD-44209"/>
<dbReference type="EMDB" id="EMD-44210"/>
<dbReference type="EMDB" id="EMD-44211"/>
<dbReference type="EMDB" id="EMD-44212"/>
<dbReference type="EMDB" id="EMD-44213"/>
<dbReference type="EMDB" id="EMD-44214"/>
<dbReference type="EMDB" id="EMD-44215"/>
<dbReference type="EMDB" id="EMD-44216"/>
<dbReference type="EMDB" id="EMD-44217"/>
<dbReference type="EMDB" id="EMD-44218"/>
<dbReference type="EMDB" id="EMD-44219"/>
<dbReference type="EMDB" id="EMD-44220"/>
<dbReference type="EMDB" id="EMD-44221"/>
<dbReference type="EMDB" id="EMD-44222"/>
<dbReference type="EMDB" id="EMD-44223"/>
<dbReference type="EMDB" id="EMD-44224"/>
<dbReference type="EMDB" id="EMD-44225"/>
<dbReference type="EMDB" id="EMD-44226"/>
<dbReference type="EMDB" id="EMD-44227"/>
<dbReference type="EMDB" id="EMD-44228"/>
<dbReference type="SMR" id="P0CH07"/>
<dbReference type="BioGRID" id="278262">
    <property type="interactions" value="7"/>
</dbReference>
<dbReference type="BioGRID" id="278890">
    <property type="interactions" value="14"/>
</dbReference>
<dbReference type="FunCoup" id="P0CH07">
    <property type="interactions" value="738"/>
</dbReference>
<dbReference type="STRING" id="284812.P0CH07"/>
<dbReference type="iPTMnet" id="P0CH07"/>
<dbReference type="EnsemblFungi" id="SPAC11G7.04.1">
    <property type="protein sequence ID" value="SPAC11G7.04.1:pep"/>
    <property type="gene ID" value="SPAC11G7.04"/>
</dbReference>
<dbReference type="EnsemblFungi" id="SPAC1805.12c.1">
    <property type="protein sequence ID" value="SPAC1805.12c.1:pep"/>
    <property type="gene ID" value="SPAC1805.12c"/>
</dbReference>
<dbReference type="GeneID" id="2542428"/>
<dbReference type="KEGG" id="spo:2541768"/>
<dbReference type="KEGG" id="spo:2542428"/>
<dbReference type="PomBase" id="SPAC1805.12c">
    <property type="gene designation" value="uep1"/>
</dbReference>
<dbReference type="VEuPathDB" id="FungiDB:SPAC11G7.04"/>
<dbReference type="VEuPathDB" id="FungiDB:SPAC1805.12c"/>
<dbReference type="HOGENOM" id="CLU_010412_3_4_1"/>
<dbReference type="InParanoid" id="P0CH07"/>
<dbReference type="PhylomeDB" id="P0CH07"/>
<dbReference type="EvolutionaryTrace" id="P0CH07"/>
<dbReference type="PRO" id="PR:P0CH07"/>
<dbReference type="Proteomes" id="UP000002485">
    <property type="component" value="Chromosome I"/>
</dbReference>
<dbReference type="GO" id="GO:0005737">
    <property type="term" value="C:cytoplasm"/>
    <property type="evidence" value="ECO:0000318"/>
    <property type="project" value="GO_Central"/>
</dbReference>
<dbReference type="GO" id="GO:0005829">
    <property type="term" value="C:cytosol"/>
    <property type="evidence" value="ECO:0007005"/>
    <property type="project" value="PomBase"/>
</dbReference>
<dbReference type="GO" id="GO:0022625">
    <property type="term" value="C:cytosolic large ribosomal subunit"/>
    <property type="evidence" value="ECO:0000266"/>
    <property type="project" value="PomBase"/>
</dbReference>
<dbReference type="GO" id="GO:0005730">
    <property type="term" value="C:nucleolus"/>
    <property type="evidence" value="ECO:0007005"/>
    <property type="project" value="PomBase"/>
</dbReference>
<dbReference type="GO" id="GO:0005634">
    <property type="term" value="C:nucleus"/>
    <property type="evidence" value="ECO:0007005"/>
    <property type="project" value="PomBase"/>
</dbReference>
<dbReference type="GO" id="GO:0031386">
    <property type="term" value="F:protein tag activity"/>
    <property type="evidence" value="ECO:0000318"/>
    <property type="project" value="GO_Central"/>
</dbReference>
<dbReference type="GO" id="GO:0003735">
    <property type="term" value="F:structural constituent of ribosome"/>
    <property type="evidence" value="ECO:0000266"/>
    <property type="project" value="PomBase"/>
</dbReference>
<dbReference type="GO" id="GO:0031625">
    <property type="term" value="F:ubiquitin protein ligase binding"/>
    <property type="evidence" value="ECO:0000318"/>
    <property type="project" value="GO_Central"/>
</dbReference>
<dbReference type="GO" id="GO:0002181">
    <property type="term" value="P:cytoplasmic translation"/>
    <property type="evidence" value="ECO:0000266"/>
    <property type="project" value="PomBase"/>
</dbReference>
<dbReference type="GO" id="GO:0019941">
    <property type="term" value="P:modification-dependent protein catabolic process"/>
    <property type="evidence" value="ECO:0000318"/>
    <property type="project" value="GO_Central"/>
</dbReference>
<dbReference type="GO" id="GO:0016567">
    <property type="term" value="P:protein ubiquitination"/>
    <property type="evidence" value="ECO:0000318"/>
    <property type="project" value="GO_Central"/>
</dbReference>
<dbReference type="GO" id="GO:0042254">
    <property type="term" value="P:ribosome biogenesis"/>
    <property type="evidence" value="ECO:0000266"/>
    <property type="project" value="PomBase"/>
</dbReference>
<dbReference type="CDD" id="cd01803">
    <property type="entry name" value="Ubl_ubiquitin"/>
    <property type="match status" value="1"/>
</dbReference>
<dbReference type="FunFam" id="3.10.20.90:FF:000014">
    <property type="entry name" value="Ubiquitin-60S ribosomal L40 fusion"/>
    <property type="match status" value="1"/>
</dbReference>
<dbReference type="FunFam" id="4.10.1060.50:FF:000001">
    <property type="entry name" value="ubiquitin-60S ribosomal protein L40"/>
    <property type="match status" value="1"/>
</dbReference>
<dbReference type="Gene3D" id="4.10.1060.50">
    <property type="match status" value="1"/>
</dbReference>
<dbReference type="Gene3D" id="3.10.20.90">
    <property type="entry name" value="Phosphatidylinositol 3-kinase Catalytic Subunit, Chain A, domain 1"/>
    <property type="match status" value="1"/>
</dbReference>
<dbReference type="InterPro" id="IPR001975">
    <property type="entry name" value="Ribosomal_eL40_dom"/>
</dbReference>
<dbReference type="InterPro" id="IPR038587">
    <property type="entry name" value="Ribosomal_eL40_sf"/>
</dbReference>
<dbReference type="InterPro" id="IPR000626">
    <property type="entry name" value="Ubiquitin-like_dom"/>
</dbReference>
<dbReference type="InterPro" id="IPR029071">
    <property type="entry name" value="Ubiquitin-like_domsf"/>
</dbReference>
<dbReference type="InterPro" id="IPR019954">
    <property type="entry name" value="Ubiquitin_CS"/>
</dbReference>
<dbReference type="InterPro" id="IPR019956">
    <property type="entry name" value="Ubiquitin_dom"/>
</dbReference>
<dbReference type="InterPro" id="IPR050158">
    <property type="entry name" value="Ubiquitin_ubiquitin-like"/>
</dbReference>
<dbReference type="PANTHER" id="PTHR10666">
    <property type="entry name" value="UBIQUITIN"/>
    <property type="match status" value="1"/>
</dbReference>
<dbReference type="Pfam" id="PF01020">
    <property type="entry name" value="Ribosomal_L40e"/>
    <property type="match status" value="1"/>
</dbReference>
<dbReference type="Pfam" id="PF00240">
    <property type="entry name" value="ubiquitin"/>
    <property type="match status" value="1"/>
</dbReference>
<dbReference type="PRINTS" id="PR00348">
    <property type="entry name" value="UBIQUITIN"/>
</dbReference>
<dbReference type="SMART" id="SM01377">
    <property type="entry name" value="Ribosomal_L40e"/>
    <property type="match status" value="1"/>
</dbReference>
<dbReference type="SMART" id="SM00213">
    <property type="entry name" value="UBQ"/>
    <property type="match status" value="1"/>
</dbReference>
<dbReference type="SUPFAM" id="SSF54236">
    <property type="entry name" value="Ubiquitin-like"/>
    <property type="match status" value="1"/>
</dbReference>
<dbReference type="PROSITE" id="PS00299">
    <property type="entry name" value="UBIQUITIN_1"/>
    <property type="match status" value="1"/>
</dbReference>
<dbReference type="PROSITE" id="PS50053">
    <property type="entry name" value="UBIQUITIN_2"/>
    <property type="match status" value="1"/>
</dbReference>
<accession>P0CH07</accession>
<accession>O13697</accession>
<accession>O14257</accession>
<accession>P0C014</accession>
<accession>P0C015</accession>
<accession>Q76PD0</accession>
<accession>Q9HDZ4</accession>
<evidence type="ECO:0000250" key="1"/>
<evidence type="ECO:0000250" key="2">
    <source>
        <dbReference type="UniProtKB" id="P0CH09"/>
    </source>
</evidence>
<evidence type="ECO:0000255" key="3">
    <source>
        <dbReference type="PROSITE-ProRule" id="PRU00214"/>
    </source>
</evidence>
<evidence type="ECO:0000269" key="4">
    <source>
    </source>
</evidence>
<evidence type="ECO:0000305" key="5"/>
<evidence type="ECO:0007829" key="6">
    <source>
        <dbReference type="PDB" id="4II2"/>
    </source>
</evidence>
<keyword id="KW-0002">3D-structure</keyword>
<keyword id="KW-0963">Cytoplasm</keyword>
<keyword id="KW-1017">Isopeptide bond</keyword>
<keyword id="KW-0539">Nucleus</keyword>
<keyword id="KW-1185">Reference proteome</keyword>
<keyword id="KW-0687">Ribonucleoprotein</keyword>
<keyword id="KW-0689">Ribosomal protein</keyword>
<keyword id="KW-0832">Ubl conjugation</keyword>
<name>RL402_SCHPO</name>